<gene>
    <name evidence="2" type="primary">sduA</name>
    <name evidence="4" type="ordered locus">BCB4264_A0974</name>
</gene>
<protein>
    <recommendedName>
        <fullName evidence="2">Shedu protein SduA</fullName>
    </recommendedName>
    <alternativeName>
        <fullName evidence="2">Putative nuclease SduA</fullName>
    </alternativeName>
</protein>
<dbReference type="EMBL" id="CP001176">
    <property type="protein sequence ID" value="ACK61957.1"/>
    <property type="molecule type" value="Genomic_DNA"/>
</dbReference>
<dbReference type="RefSeq" id="WP_001280798.1">
    <property type="nucleotide sequence ID" value="NC_011725.1"/>
</dbReference>
<dbReference type="PDB" id="8TI8">
    <property type="method" value="EM"/>
    <property type="resolution" value="2.90 A"/>
    <property type="chains" value="A/B/C/D=2-380"/>
</dbReference>
<dbReference type="PDB" id="8TI9">
    <property type="method" value="EM"/>
    <property type="resolution" value="3.19 A"/>
    <property type="chains" value="A/B/C/D/E/F/G/H=171-380"/>
</dbReference>
<dbReference type="PDB" id="8TIA">
    <property type="method" value="EM"/>
    <property type="resolution" value="2.77 A"/>
    <property type="chains" value="A/B/C/D=171-380"/>
</dbReference>
<dbReference type="PDBsum" id="8TI8"/>
<dbReference type="PDBsum" id="8TI9"/>
<dbReference type="PDBsum" id="8TIA"/>
<dbReference type="EMDB" id="EMD-41281"/>
<dbReference type="EMDB" id="EMD-41282"/>
<dbReference type="SMR" id="B7HFR2"/>
<dbReference type="KEGG" id="bcb:BCB4264_A0974"/>
<dbReference type="HOGENOM" id="CLU_741573_0_0_9"/>
<dbReference type="Proteomes" id="UP000007096">
    <property type="component" value="Chromosome"/>
</dbReference>
<dbReference type="GO" id="GO:0004518">
    <property type="term" value="F:nuclease activity"/>
    <property type="evidence" value="ECO:0007669"/>
    <property type="project" value="UniProtKB-KW"/>
</dbReference>
<dbReference type="GO" id="GO:0051607">
    <property type="term" value="P:defense response to virus"/>
    <property type="evidence" value="ECO:0007669"/>
    <property type="project" value="UniProtKB-KW"/>
</dbReference>
<dbReference type="InterPro" id="IPR025359">
    <property type="entry name" value="SduA_C"/>
</dbReference>
<dbReference type="InterPro" id="IPR048396">
    <property type="entry name" value="SduA_N"/>
</dbReference>
<dbReference type="Pfam" id="PF14082">
    <property type="entry name" value="SduA_C"/>
    <property type="match status" value="1"/>
</dbReference>
<dbReference type="Pfam" id="PF21407">
    <property type="entry name" value="SduA_N"/>
    <property type="match status" value="1"/>
</dbReference>
<feature type="chain" id="PRO_0000456381" description="Shedu protein SduA">
    <location>
        <begin position="1"/>
        <end position="380"/>
    </location>
</feature>
<feature type="helix" evidence="5">
    <location>
        <begin position="123"/>
        <end position="129"/>
    </location>
</feature>
<feature type="helix" evidence="5">
    <location>
        <begin position="133"/>
        <end position="140"/>
    </location>
</feature>
<feature type="turn" evidence="5">
    <location>
        <begin position="142"/>
        <end position="144"/>
    </location>
</feature>
<feature type="helix" evidence="5">
    <location>
        <begin position="148"/>
        <end position="155"/>
    </location>
</feature>
<feature type="helix" evidence="5">
    <location>
        <begin position="160"/>
        <end position="168"/>
    </location>
</feature>
<feature type="helix" evidence="7">
    <location>
        <begin position="174"/>
        <end position="197"/>
    </location>
</feature>
<feature type="strand" evidence="7">
    <location>
        <begin position="198"/>
        <end position="200"/>
    </location>
</feature>
<feature type="helix" evidence="7">
    <location>
        <begin position="204"/>
        <end position="213"/>
    </location>
</feature>
<feature type="helix" evidence="7">
    <location>
        <begin position="215"/>
        <end position="221"/>
    </location>
</feature>
<feature type="strand" evidence="7">
    <location>
        <begin position="225"/>
        <end position="229"/>
    </location>
</feature>
<feature type="strand" evidence="7">
    <location>
        <begin position="232"/>
        <end position="235"/>
    </location>
</feature>
<feature type="helix" evidence="7">
    <location>
        <begin position="247"/>
        <end position="253"/>
    </location>
</feature>
<feature type="helix" evidence="7">
    <location>
        <begin position="255"/>
        <end position="257"/>
    </location>
</feature>
<feature type="strand" evidence="7">
    <location>
        <begin position="261"/>
        <end position="265"/>
    </location>
</feature>
<feature type="strand" evidence="6">
    <location>
        <begin position="278"/>
        <end position="281"/>
    </location>
</feature>
<feature type="helix" evidence="7">
    <location>
        <begin position="287"/>
        <end position="317"/>
    </location>
</feature>
<feature type="strand" evidence="7">
    <location>
        <begin position="329"/>
        <end position="333"/>
    </location>
</feature>
<feature type="helix" evidence="7">
    <location>
        <begin position="337"/>
        <end position="339"/>
    </location>
</feature>
<feature type="helix" evidence="7">
    <location>
        <begin position="343"/>
        <end position="353"/>
    </location>
</feature>
<feature type="strand" evidence="7">
    <location>
        <begin position="356"/>
        <end position="362"/>
    </location>
</feature>
<feature type="helix" evidence="7">
    <location>
        <begin position="364"/>
        <end position="378"/>
    </location>
</feature>
<sequence>MSDKINVWTTSRDSAVCGDIELKKTSTTRLIFRPEIVNNNKNPKASVRGCFIFQKKGRNALWDDYKELDMNKLKAEEWIKLEINSDAMLTLTKEIQKHYAVHEKYGVRYGAFHLFKDNPDIEKLIEMFESNTDLLTQLMEDDKSEALEKTLEWIVTNDNPDKIIDRLKNLKEQDLDQLNTLIGIANLKKVLSVWESNKLTNTSEKFWQSVLKENTWILSQIFSNPTVLINDEAYVGGKTVKNDSGKLVDFLYANPFSKDAVLIEIKTPSTPLITPTEYRTGVYSAHKDLTGAVTQVLTYKTTLQREYQNIDYNNYRQGIKTDFDIITPCCVVIAGMFDTLTDTAHRHSFELYRKELKNVTVITFDELFERVKGLIKLLEG</sequence>
<comment type="function">
    <text evidence="1 3">Only component of antiviral defense system Shedu. Expression of Shedu in B.subtilis (strain BEST7003) confers resistance to phages phi105, phi29, rho14 and to a lesser extent to SPP1 (PubMed:29371424). May be an endonuclease (Probable).</text>
</comment>
<organism>
    <name type="scientific">Bacillus cereus (strain B4264)</name>
    <dbReference type="NCBI Taxonomy" id="405532"/>
    <lineage>
        <taxon>Bacteria</taxon>
        <taxon>Bacillati</taxon>
        <taxon>Bacillota</taxon>
        <taxon>Bacilli</taxon>
        <taxon>Bacillales</taxon>
        <taxon>Bacillaceae</taxon>
        <taxon>Bacillus</taxon>
        <taxon>Bacillus cereus group</taxon>
    </lineage>
</organism>
<reference evidence="4" key="1">
    <citation type="submission" date="2008-10" db="EMBL/GenBank/DDBJ databases">
        <title>Genome sequence of Bacillus cereus B4264.</title>
        <authorList>
            <person name="Dodson R.J."/>
            <person name="Durkin A.S."/>
            <person name="Rosovitz M.J."/>
            <person name="Rasko D.A."/>
            <person name="Hoffmaster A."/>
            <person name="Ravel J."/>
            <person name="Sutton G."/>
        </authorList>
    </citation>
    <scope>NUCLEOTIDE SEQUENCE [LARGE SCALE GENOMIC DNA]</scope>
    <source>
        <strain>B4264</strain>
    </source>
</reference>
<reference key="2">
    <citation type="journal article" date="2018" name="Science">
        <title>Systematic discovery of antiphage defense systems in the microbial pangenome.</title>
        <authorList>
            <person name="Doron S."/>
            <person name="Melamed S."/>
            <person name="Ofir G."/>
            <person name="Leavitt A."/>
            <person name="Lopatina A."/>
            <person name="Keren M."/>
            <person name="Amitai G."/>
            <person name="Sorek R."/>
        </authorList>
    </citation>
    <scope>FUNCTION</scope>
    <scope>EXPRESSION IN B.SUBTILIS</scope>
    <source>
        <strain>B4264</strain>
    </source>
</reference>
<proteinExistence type="evidence at protein level"/>
<keyword id="KW-0002">3D-structure</keyword>
<keyword id="KW-0051">Antiviral defense</keyword>
<keyword id="KW-0378">Hydrolase</keyword>
<keyword id="KW-0540">Nuclease</keyword>
<name>SDUA_BACC4</name>
<evidence type="ECO:0000269" key="1">
    <source>
    </source>
</evidence>
<evidence type="ECO:0000303" key="2">
    <source>
    </source>
</evidence>
<evidence type="ECO:0000305" key="3">
    <source>
    </source>
</evidence>
<evidence type="ECO:0000312" key="4">
    <source>
        <dbReference type="EMBL" id="ACK61957.1"/>
    </source>
</evidence>
<evidence type="ECO:0007829" key="5">
    <source>
        <dbReference type="PDB" id="8TI8"/>
    </source>
</evidence>
<evidence type="ECO:0007829" key="6">
    <source>
        <dbReference type="PDB" id="8TI9"/>
    </source>
</evidence>
<evidence type="ECO:0007829" key="7">
    <source>
        <dbReference type="PDB" id="8TIA"/>
    </source>
</evidence>
<accession>B7HFR2</accession>